<name>RS3_PHEZH</name>
<feature type="chain" id="PRO_1000141000" description="Small ribosomal subunit protein uS3">
    <location>
        <begin position="1"/>
        <end position="253"/>
    </location>
</feature>
<feature type="domain" description="KH type-2" evidence="1">
    <location>
        <begin position="39"/>
        <end position="107"/>
    </location>
</feature>
<feature type="region of interest" description="Disordered" evidence="2">
    <location>
        <begin position="215"/>
        <end position="253"/>
    </location>
</feature>
<feature type="compositionally biased region" description="Basic and acidic residues" evidence="2">
    <location>
        <begin position="230"/>
        <end position="253"/>
    </location>
</feature>
<keyword id="KW-1185">Reference proteome</keyword>
<keyword id="KW-0687">Ribonucleoprotein</keyword>
<keyword id="KW-0689">Ribosomal protein</keyword>
<keyword id="KW-0694">RNA-binding</keyword>
<keyword id="KW-0699">rRNA-binding</keyword>
<protein>
    <recommendedName>
        <fullName evidence="1">Small ribosomal subunit protein uS3</fullName>
    </recommendedName>
    <alternativeName>
        <fullName evidence="3">30S ribosomal protein S3</fullName>
    </alternativeName>
</protein>
<reference key="1">
    <citation type="journal article" date="2008" name="BMC Genomics">
        <title>Complete genome of Phenylobacterium zucineum - a novel facultative intracellular bacterium isolated from human erythroleukemia cell line K562.</title>
        <authorList>
            <person name="Luo Y."/>
            <person name="Xu X."/>
            <person name="Ding Z."/>
            <person name="Liu Z."/>
            <person name="Zhang B."/>
            <person name="Yan Z."/>
            <person name="Sun J."/>
            <person name="Hu S."/>
            <person name="Hu X."/>
        </authorList>
    </citation>
    <scope>NUCLEOTIDE SEQUENCE [LARGE SCALE GENOMIC DNA]</scope>
    <source>
        <strain>HLK1</strain>
    </source>
</reference>
<organism>
    <name type="scientific">Phenylobacterium zucineum (strain HLK1)</name>
    <dbReference type="NCBI Taxonomy" id="450851"/>
    <lineage>
        <taxon>Bacteria</taxon>
        <taxon>Pseudomonadati</taxon>
        <taxon>Pseudomonadota</taxon>
        <taxon>Alphaproteobacteria</taxon>
        <taxon>Caulobacterales</taxon>
        <taxon>Caulobacteraceae</taxon>
        <taxon>Phenylobacterium</taxon>
    </lineage>
</organism>
<evidence type="ECO:0000255" key="1">
    <source>
        <dbReference type="HAMAP-Rule" id="MF_01309"/>
    </source>
</evidence>
<evidence type="ECO:0000256" key="2">
    <source>
        <dbReference type="SAM" id="MobiDB-lite"/>
    </source>
</evidence>
<evidence type="ECO:0000305" key="3"/>
<accession>B4R8M3</accession>
<comment type="function">
    <text evidence="1">Binds the lower part of the 30S subunit head. Binds mRNA in the 70S ribosome, positioning it for translation.</text>
</comment>
<comment type="subunit">
    <text evidence="1">Part of the 30S ribosomal subunit. Forms a tight complex with proteins S10 and S14.</text>
</comment>
<comment type="similarity">
    <text evidence="1">Belongs to the universal ribosomal protein uS3 family.</text>
</comment>
<gene>
    <name evidence="1" type="primary">rpsC</name>
    <name type="ordered locus">PHZ_c1236</name>
</gene>
<proteinExistence type="inferred from homology"/>
<dbReference type="EMBL" id="CP000747">
    <property type="protein sequence ID" value="ACG77650.1"/>
    <property type="molecule type" value="Genomic_DNA"/>
</dbReference>
<dbReference type="RefSeq" id="WP_012521794.1">
    <property type="nucleotide sequence ID" value="NC_011144.1"/>
</dbReference>
<dbReference type="SMR" id="B4R8M3"/>
<dbReference type="STRING" id="450851.PHZ_c1236"/>
<dbReference type="KEGG" id="pzu:PHZ_c1236"/>
<dbReference type="eggNOG" id="COG0092">
    <property type="taxonomic scope" value="Bacteria"/>
</dbReference>
<dbReference type="HOGENOM" id="CLU_058591_0_2_5"/>
<dbReference type="OrthoDB" id="9806396at2"/>
<dbReference type="Proteomes" id="UP000001868">
    <property type="component" value="Chromosome"/>
</dbReference>
<dbReference type="GO" id="GO:0022627">
    <property type="term" value="C:cytosolic small ribosomal subunit"/>
    <property type="evidence" value="ECO:0007669"/>
    <property type="project" value="TreeGrafter"/>
</dbReference>
<dbReference type="GO" id="GO:0003729">
    <property type="term" value="F:mRNA binding"/>
    <property type="evidence" value="ECO:0007669"/>
    <property type="project" value="UniProtKB-UniRule"/>
</dbReference>
<dbReference type="GO" id="GO:0019843">
    <property type="term" value="F:rRNA binding"/>
    <property type="evidence" value="ECO:0007669"/>
    <property type="project" value="UniProtKB-UniRule"/>
</dbReference>
<dbReference type="GO" id="GO:0003735">
    <property type="term" value="F:structural constituent of ribosome"/>
    <property type="evidence" value="ECO:0007669"/>
    <property type="project" value="InterPro"/>
</dbReference>
<dbReference type="GO" id="GO:0006412">
    <property type="term" value="P:translation"/>
    <property type="evidence" value="ECO:0007669"/>
    <property type="project" value="UniProtKB-UniRule"/>
</dbReference>
<dbReference type="CDD" id="cd02412">
    <property type="entry name" value="KH-II_30S_S3"/>
    <property type="match status" value="1"/>
</dbReference>
<dbReference type="FunFam" id="3.30.1140.32:FF:000001">
    <property type="entry name" value="30S ribosomal protein S3"/>
    <property type="match status" value="1"/>
</dbReference>
<dbReference type="FunFam" id="3.30.300.20:FF:000001">
    <property type="entry name" value="30S ribosomal protein S3"/>
    <property type="match status" value="1"/>
</dbReference>
<dbReference type="Gene3D" id="3.30.300.20">
    <property type="match status" value="1"/>
</dbReference>
<dbReference type="Gene3D" id="3.30.1140.32">
    <property type="entry name" value="Ribosomal protein S3, C-terminal domain"/>
    <property type="match status" value="1"/>
</dbReference>
<dbReference type="HAMAP" id="MF_01309_B">
    <property type="entry name" value="Ribosomal_uS3_B"/>
    <property type="match status" value="1"/>
</dbReference>
<dbReference type="InterPro" id="IPR004087">
    <property type="entry name" value="KH_dom"/>
</dbReference>
<dbReference type="InterPro" id="IPR015946">
    <property type="entry name" value="KH_dom-like_a/b"/>
</dbReference>
<dbReference type="InterPro" id="IPR004044">
    <property type="entry name" value="KH_dom_type_2"/>
</dbReference>
<dbReference type="InterPro" id="IPR009019">
    <property type="entry name" value="KH_sf_prok-type"/>
</dbReference>
<dbReference type="InterPro" id="IPR036419">
    <property type="entry name" value="Ribosomal_S3_C_sf"/>
</dbReference>
<dbReference type="InterPro" id="IPR005704">
    <property type="entry name" value="Ribosomal_uS3_bac-typ"/>
</dbReference>
<dbReference type="InterPro" id="IPR001351">
    <property type="entry name" value="Ribosomal_uS3_C"/>
</dbReference>
<dbReference type="InterPro" id="IPR018280">
    <property type="entry name" value="Ribosomal_uS3_CS"/>
</dbReference>
<dbReference type="NCBIfam" id="TIGR01009">
    <property type="entry name" value="rpsC_bact"/>
    <property type="match status" value="1"/>
</dbReference>
<dbReference type="PANTHER" id="PTHR11760">
    <property type="entry name" value="30S/40S RIBOSOMAL PROTEIN S3"/>
    <property type="match status" value="1"/>
</dbReference>
<dbReference type="PANTHER" id="PTHR11760:SF19">
    <property type="entry name" value="SMALL RIBOSOMAL SUBUNIT PROTEIN US3C"/>
    <property type="match status" value="1"/>
</dbReference>
<dbReference type="Pfam" id="PF07650">
    <property type="entry name" value="KH_2"/>
    <property type="match status" value="1"/>
</dbReference>
<dbReference type="Pfam" id="PF00189">
    <property type="entry name" value="Ribosomal_S3_C"/>
    <property type="match status" value="1"/>
</dbReference>
<dbReference type="SMART" id="SM00322">
    <property type="entry name" value="KH"/>
    <property type="match status" value="1"/>
</dbReference>
<dbReference type="SUPFAM" id="SSF54814">
    <property type="entry name" value="Prokaryotic type KH domain (KH-domain type II)"/>
    <property type="match status" value="1"/>
</dbReference>
<dbReference type="SUPFAM" id="SSF54821">
    <property type="entry name" value="Ribosomal protein S3 C-terminal domain"/>
    <property type="match status" value="1"/>
</dbReference>
<dbReference type="PROSITE" id="PS50823">
    <property type="entry name" value="KH_TYPE_2"/>
    <property type="match status" value="1"/>
</dbReference>
<dbReference type="PROSITE" id="PS00548">
    <property type="entry name" value="RIBOSOMAL_S3"/>
    <property type="match status" value="1"/>
</dbReference>
<sequence length="253" mass="28481">MGQKINPVGLRLGINRTWDSRWFADGPEYGRLLHEDIKVRRALKKRLYQAGVSRIIIERPHKKCRITIYAARPGVIIGKKGADIEKLRKDVAAMTDGEVHLNIVEIRKPETDAQLIAENIAQQLERRVAFRRAMKRSMQSAMRLGAKGVRINVSGRLGGAEIARMEWYREGRVPLHTLRADVDYGFTEAKTTYGVIGVKVWVFKGEVLEHDPMALDKRLAGESGPAGEGGGRERGDRPDRGPRRERRGEPSNA</sequence>